<comment type="function">
    <text evidence="1">Molecular chaperone capable of stabilizing a range of proteins. Seems to fulfill an ATP-independent, HSP70-like function in archaeal de novo protein folding.</text>
</comment>
<comment type="subunit">
    <text evidence="1">Heterohexamer of two alpha and four beta subunits.</text>
</comment>
<comment type="subcellular location">
    <subcellularLocation>
        <location evidence="1">Cytoplasm</location>
    </subcellularLocation>
</comment>
<comment type="similarity">
    <text evidence="1">Belongs to the prefoldin subunit beta family.</text>
</comment>
<name>PFDB_CALMQ</name>
<protein>
    <recommendedName>
        <fullName evidence="1">Prefoldin subunit beta</fullName>
    </recommendedName>
    <alternativeName>
        <fullName evidence="1">GimC subunit beta</fullName>
    </alternativeName>
</protein>
<keyword id="KW-0143">Chaperone</keyword>
<keyword id="KW-0963">Cytoplasm</keyword>
<keyword id="KW-1185">Reference proteome</keyword>
<evidence type="ECO:0000255" key="1">
    <source>
        <dbReference type="HAMAP-Rule" id="MF_00307"/>
    </source>
</evidence>
<reference key="1">
    <citation type="submission" date="2007-10" db="EMBL/GenBank/DDBJ databases">
        <title>Complete sequence of Caldivirga maquilingensis IC-167.</title>
        <authorList>
            <consortium name="US DOE Joint Genome Institute"/>
            <person name="Copeland A."/>
            <person name="Lucas S."/>
            <person name="Lapidus A."/>
            <person name="Barry K."/>
            <person name="Glavina del Rio T."/>
            <person name="Dalin E."/>
            <person name="Tice H."/>
            <person name="Pitluck S."/>
            <person name="Saunders E."/>
            <person name="Brettin T."/>
            <person name="Bruce D."/>
            <person name="Detter J.C."/>
            <person name="Han C."/>
            <person name="Schmutz J."/>
            <person name="Larimer F."/>
            <person name="Land M."/>
            <person name="Hauser L."/>
            <person name="Kyrpides N."/>
            <person name="Ivanova N."/>
            <person name="Biddle J.F."/>
            <person name="Zhang Z."/>
            <person name="Fitz-Gibbon S.T."/>
            <person name="Lowe T.M."/>
            <person name="Saltikov C."/>
            <person name="House C.H."/>
            <person name="Richardson P."/>
        </authorList>
    </citation>
    <scope>NUCLEOTIDE SEQUENCE [LARGE SCALE GENOMIC DNA]</scope>
    <source>
        <strain>ATCC 700844 / DSM 13496 / JCM 10307 / IC-167</strain>
    </source>
</reference>
<organism>
    <name type="scientific">Caldivirga maquilingensis (strain ATCC 700844 / DSM 13496 / JCM 10307 / IC-167)</name>
    <dbReference type="NCBI Taxonomy" id="397948"/>
    <lineage>
        <taxon>Archaea</taxon>
        <taxon>Thermoproteota</taxon>
        <taxon>Thermoprotei</taxon>
        <taxon>Thermoproteales</taxon>
        <taxon>Thermoproteaceae</taxon>
        <taxon>Caldivirga</taxon>
    </lineage>
</organism>
<accession>A8MB97</accession>
<proteinExistence type="inferred from homology"/>
<sequence>MATEIPPAVRNDLDRLRQLEDQLQAVLLRKQQYEGELRNVDKALNELNKLPQDSKVYKVVGTFLLSTTRDEAIQDLNQRKELLDLHLQSLVKQENMLRKQISELENKVKQVLAAGQGGQVQ</sequence>
<feature type="chain" id="PRO_1000079065" description="Prefoldin subunit beta">
    <location>
        <begin position="1"/>
        <end position="121"/>
    </location>
</feature>
<dbReference type="EMBL" id="CP000852">
    <property type="protein sequence ID" value="ABW01187.1"/>
    <property type="molecule type" value="Genomic_DNA"/>
</dbReference>
<dbReference type="RefSeq" id="WP_012185407.1">
    <property type="nucleotide sequence ID" value="NC_009954.1"/>
</dbReference>
<dbReference type="SMR" id="A8MB97"/>
<dbReference type="STRING" id="397948.Cmaq_0341"/>
<dbReference type="GeneID" id="5709862"/>
<dbReference type="KEGG" id="cma:Cmaq_0341"/>
<dbReference type="eggNOG" id="arCOG01342">
    <property type="taxonomic scope" value="Archaea"/>
</dbReference>
<dbReference type="HOGENOM" id="CLU_131909_2_1_2"/>
<dbReference type="OrthoDB" id="27242at2157"/>
<dbReference type="Proteomes" id="UP000001137">
    <property type="component" value="Chromosome"/>
</dbReference>
<dbReference type="GO" id="GO:0005737">
    <property type="term" value="C:cytoplasm"/>
    <property type="evidence" value="ECO:0007669"/>
    <property type="project" value="UniProtKB-SubCell"/>
</dbReference>
<dbReference type="GO" id="GO:0016272">
    <property type="term" value="C:prefoldin complex"/>
    <property type="evidence" value="ECO:0007669"/>
    <property type="project" value="UniProtKB-UniRule"/>
</dbReference>
<dbReference type="GO" id="GO:0044183">
    <property type="term" value="F:protein folding chaperone"/>
    <property type="evidence" value="ECO:0007669"/>
    <property type="project" value="TreeGrafter"/>
</dbReference>
<dbReference type="GO" id="GO:0051082">
    <property type="term" value="F:unfolded protein binding"/>
    <property type="evidence" value="ECO:0007669"/>
    <property type="project" value="UniProtKB-UniRule"/>
</dbReference>
<dbReference type="CDD" id="cd23162">
    <property type="entry name" value="Prefoldin_beta_GimC"/>
    <property type="match status" value="1"/>
</dbReference>
<dbReference type="Gene3D" id="1.10.287.370">
    <property type="match status" value="1"/>
</dbReference>
<dbReference type="HAMAP" id="MF_00307">
    <property type="entry name" value="PfdB"/>
    <property type="match status" value="1"/>
</dbReference>
<dbReference type="InterPro" id="IPR002777">
    <property type="entry name" value="PFD_beta-like"/>
</dbReference>
<dbReference type="InterPro" id="IPR012713">
    <property type="entry name" value="PfdB"/>
</dbReference>
<dbReference type="InterPro" id="IPR009053">
    <property type="entry name" value="Prefoldin"/>
</dbReference>
<dbReference type="NCBIfam" id="TIGR02338">
    <property type="entry name" value="gimC_beta"/>
    <property type="match status" value="1"/>
</dbReference>
<dbReference type="PANTHER" id="PTHR20903:SF0">
    <property type="entry name" value="PREFOLDIN SUBUNIT 1"/>
    <property type="match status" value="1"/>
</dbReference>
<dbReference type="PANTHER" id="PTHR20903">
    <property type="entry name" value="PREFOLDIN SUBUNIT 1-RELATED"/>
    <property type="match status" value="1"/>
</dbReference>
<dbReference type="Pfam" id="PF01920">
    <property type="entry name" value="Prefoldin_2"/>
    <property type="match status" value="1"/>
</dbReference>
<dbReference type="SUPFAM" id="SSF46579">
    <property type="entry name" value="Prefoldin"/>
    <property type="match status" value="1"/>
</dbReference>
<gene>
    <name evidence="1" type="primary">pfdB</name>
    <name type="ordered locus">Cmaq_0341</name>
</gene>